<sequence length="193" mass="21464">MEVDLLHFEKKYHNCIVAGIDEAGRGPLAGPVVASAVIVDNANIITGIKDSKKLSKKKRELLYEQITSNYVWATAIISHTEIDDINILEATKKACSIAVANLSLEPEIVLVDGNMQFKDERFVSIINGDNLSLSIAAASIVAKVTRDRLMLDLSAEFPQYLWHKNSGYGTKEHIEAINIYGLSPYHRRSFRCC</sequence>
<protein>
    <recommendedName>
        <fullName evidence="1">Ribonuclease HII</fullName>
        <shortName evidence="1">RNase HII</shortName>
        <ecNumber evidence="1">3.1.26.4</ecNumber>
    </recommendedName>
</protein>
<proteinExistence type="inferred from homology"/>
<dbReference type="EC" id="3.1.26.4" evidence="1"/>
<dbReference type="EMBL" id="CP001612">
    <property type="protein sequence ID" value="ACP53204.1"/>
    <property type="molecule type" value="Genomic_DNA"/>
</dbReference>
<dbReference type="RefSeq" id="WP_012719467.1">
    <property type="nucleotide sequence ID" value="NC_012633.1"/>
</dbReference>
<dbReference type="SMR" id="C3PMP4"/>
<dbReference type="KEGG" id="raf:RAF_ORF0247"/>
<dbReference type="HOGENOM" id="CLU_036532_3_1_5"/>
<dbReference type="Proteomes" id="UP000002305">
    <property type="component" value="Chromosome"/>
</dbReference>
<dbReference type="GO" id="GO:0005737">
    <property type="term" value="C:cytoplasm"/>
    <property type="evidence" value="ECO:0007669"/>
    <property type="project" value="UniProtKB-SubCell"/>
</dbReference>
<dbReference type="GO" id="GO:0032299">
    <property type="term" value="C:ribonuclease H2 complex"/>
    <property type="evidence" value="ECO:0007669"/>
    <property type="project" value="TreeGrafter"/>
</dbReference>
<dbReference type="GO" id="GO:0030145">
    <property type="term" value="F:manganese ion binding"/>
    <property type="evidence" value="ECO:0007669"/>
    <property type="project" value="UniProtKB-UniRule"/>
</dbReference>
<dbReference type="GO" id="GO:0003723">
    <property type="term" value="F:RNA binding"/>
    <property type="evidence" value="ECO:0007669"/>
    <property type="project" value="InterPro"/>
</dbReference>
<dbReference type="GO" id="GO:0004523">
    <property type="term" value="F:RNA-DNA hybrid ribonuclease activity"/>
    <property type="evidence" value="ECO:0007669"/>
    <property type="project" value="UniProtKB-UniRule"/>
</dbReference>
<dbReference type="GO" id="GO:0043137">
    <property type="term" value="P:DNA replication, removal of RNA primer"/>
    <property type="evidence" value="ECO:0007669"/>
    <property type="project" value="TreeGrafter"/>
</dbReference>
<dbReference type="GO" id="GO:0006298">
    <property type="term" value="P:mismatch repair"/>
    <property type="evidence" value="ECO:0007669"/>
    <property type="project" value="TreeGrafter"/>
</dbReference>
<dbReference type="CDD" id="cd07182">
    <property type="entry name" value="RNase_HII_bacteria_HII_like"/>
    <property type="match status" value="1"/>
</dbReference>
<dbReference type="Gene3D" id="3.30.420.10">
    <property type="entry name" value="Ribonuclease H-like superfamily/Ribonuclease H"/>
    <property type="match status" value="1"/>
</dbReference>
<dbReference type="HAMAP" id="MF_00052_B">
    <property type="entry name" value="RNase_HII_B"/>
    <property type="match status" value="1"/>
</dbReference>
<dbReference type="InterPro" id="IPR022898">
    <property type="entry name" value="RNase_HII"/>
</dbReference>
<dbReference type="InterPro" id="IPR001352">
    <property type="entry name" value="RNase_HII/HIII"/>
</dbReference>
<dbReference type="InterPro" id="IPR024567">
    <property type="entry name" value="RNase_HII/HIII_dom"/>
</dbReference>
<dbReference type="InterPro" id="IPR012337">
    <property type="entry name" value="RNaseH-like_sf"/>
</dbReference>
<dbReference type="InterPro" id="IPR036397">
    <property type="entry name" value="RNaseH_sf"/>
</dbReference>
<dbReference type="NCBIfam" id="NF000594">
    <property type="entry name" value="PRK00015.1-1"/>
    <property type="match status" value="1"/>
</dbReference>
<dbReference type="NCBIfam" id="NF000595">
    <property type="entry name" value="PRK00015.1-3"/>
    <property type="match status" value="1"/>
</dbReference>
<dbReference type="PANTHER" id="PTHR10954">
    <property type="entry name" value="RIBONUCLEASE H2 SUBUNIT A"/>
    <property type="match status" value="1"/>
</dbReference>
<dbReference type="PANTHER" id="PTHR10954:SF18">
    <property type="entry name" value="RIBONUCLEASE HII"/>
    <property type="match status" value="1"/>
</dbReference>
<dbReference type="Pfam" id="PF01351">
    <property type="entry name" value="RNase_HII"/>
    <property type="match status" value="1"/>
</dbReference>
<dbReference type="SUPFAM" id="SSF53098">
    <property type="entry name" value="Ribonuclease H-like"/>
    <property type="match status" value="1"/>
</dbReference>
<dbReference type="PROSITE" id="PS51975">
    <property type="entry name" value="RNASE_H_2"/>
    <property type="match status" value="1"/>
</dbReference>
<accession>C3PMP4</accession>
<name>RNH2_RICAE</name>
<feature type="chain" id="PRO_1000202291" description="Ribonuclease HII">
    <location>
        <begin position="1"/>
        <end position="193"/>
    </location>
</feature>
<feature type="domain" description="RNase H type-2" evidence="2">
    <location>
        <begin position="15"/>
        <end position="193"/>
    </location>
</feature>
<feature type="binding site" evidence="1">
    <location>
        <position position="21"/>
    </location>
    <ligand>
        <name>a divalent metal cation</name>
        <dbReference type="ChEBI" id="CHEBI:60240"/>
    </ligand>
</feature>
<feature type="binding site" evidence="1">
    <location>
        <position position="22"/>
    </location>
    <ligand>
        <name>a divalent metal cation</name>
        <dbReference type="ChEBI" id="CHEBI:60240"/>
    </ligand>
</feature>
<feature type="binding site" evidence="1">
    <location>
        <position position="112"/>
    </location>
    <ligand>
        <name>a divalent metal cation</name>
        <dbReference type="ChEBI" id="CHEBI:60240"/>
    </ligand>
</feature>
<gene>
    <name evidence="1" type="primary">rnhB</name>
    <name type="ordered locus">RAF_ORF0247</name>
</gene>
<organism>
    <name type="scientific">Rickettsia africae (strain ESF-5)</name>
    <dbReference type="NCBI Taxonomy" id="347255"/>
    <lineage>
        <taxon>Bacteria</taxon>
        <taxon>Pseudomonadati</taxon>
        <taxon>Pseudomonadota</taxon>
        <taxon>Alphaproteobacteria</taxon>
        <taxon>Rickettsiales</taxon>
        <taxon>Rickettsiaceae</taxon>
        <taxon>Rickettsieae</taxon>
        <taxon>Rickettsia</taxon>
        <taxon>spotted fever group</taxon>
    </lineage>
</organism>
<comment type="function">
    <text evidence="1">Endonuclease that specifically degrades the RNA of RNA-DNA hybrids.</text>
</comment>
<comment type="catalytic activity">
    <reaction evidence="1">
        <text>Endonucleolytic cleavage to 5'-phosphomonoester.</text>
        <dbReference type="EC" id="3.1.26.4"/>
    </reaction>
</comment>
<comment type="cofactor">
    <cofactor evidence="1">
        <name>Mn(2+)</name>
        <dbReference type="ChEBI" id="CHEBI:29035"/>
    </cofactor>
    <cofactor evidence="1">
        <name>Mg(2+)</name>
        <dbReference type="ChEBI" id="CHEBI:18420"/>
    </cofactor>
    <text evidence="1">Manganese or magnesium. Binds 1 divalent metal ion per monomer in the absence of substrate. May bind a second metal ion after substrate binding.</text>
</comment>
<comment type="subcellular location">
    <subcellularLocation>
        <location evidence="1">Cytoplasm</location>
    </subcellularLocation>
</comment>
<comment type="similarity">
    <text evidence="1">Belongs to the RNase HII family.</text>
</comment>
<reference key="1">
    <citation type="journal article" date="2009" name="BMC Genomics">
        <title>Analysis of the Rickettsia africae genome reveals that virulence acquisition in Rickettsia species may be explained by genome reduction.</title>
        <authorList>
            <person name="Fournier P.-E."/>
            <person name="El Karkouri K."/>
            <person name="Leroy Q."/>
            <person name="Robert C."/>
            <person name="Giumelli B."/>
            <person name="Renesto P."/>
            <person name="Socolovschi C."/>
            <person name="Parola P."/>
            <person name="Audic S."/>
            <person name="Raoult D."/>
        </authorList>
    </citation>
    <scope>NUCLEOTIDE SEQUENCE [LARGE SCALE GENOMIC DNA]</scope>
    <source>
        <strain>ESF-5</strain>
    </source>
</reference>
<evidence type="ECO:0000255" key="1">
    <source>
        <dbReference type="HAMAP-Rule" id="MF_00052"/>
    </source>
</evidence>
<evidence type="ECO:0000255" key="2">
    <source>
        <dbReference type="PROSITE-ProRule" id="PRU01319"/>
    </source>
</evidence>
<keyword id="KW-0963">Cytoplasm</keyword>
<keyword id="KW-0255">Endonuclease</keyword>
<keyword id="KW-0378">Hydrolase</keyword>
<keyword id="KW-0464">Manganese</keyword>
<keyword id="KW-0479">Metal-binding</keyword>
<keyword id="KW-0540">Nuclease</keyword>